<sequence length="151" mass="17292">MSHLNIANLGEDFVAQWLQSTGWMILNRQFSCRWGEIDIIAQHTRNNQESILAFVEVKTRSPGNWDDGGRGAITLKKQAKIERTARIFLAKYPDKAEYICRFDVAIVSYQIISKQDHELSITQESVTSSSVGEYKFQLQEYIPAAFECLID</sequence>
<feature type="chain" id="PRO_0000336119" description="UPF0102 protein Ava_4800">
    <location>
        <begin position="1"/>
        <end position="151"/>
    </location>
</feature>
<name>Y4800_TRIV2</name>
<gene>
    <name type="ordered locus">Ava_4800</name>
</gene>
<organism>
    <name type="scientific">Trichormus variabilis (strain ATCC 29413 / PCC 7937)</name>
    <name type="common">Anabaena variabilis</name>
    <dbReference type="NCBI Taxonomy" id="240292"/>
    <lineage>
        <taxon>Bacteria</taxon>
        <taxon>Bacillati</taxon>
        <taxon>Cyanobacteriota</taxon>
        <taxon>Cyanophyceae</taxon>
        <taxon>Nostocales</taxon>
        <taxon>Nostocaceae</taxon>
        <taxon>Trichormus</taxon>
    </lineage>
</organism>
<evidence type="ECO:0000255" key="1">
    <source>
        <dbReference type="HAMAP-Rule" id="MF_00048"/>
    </source>
</evidence>
<reference key="1">
    <citation type="journal article" date="2014" name="Stand. Genomic Sci.">
        <title>Complete genome sequence of Anabaena variabilis ATCC 29413.</title>
        <authorList>
            <person name="Thiel T."/>
            <person name="Pratte B.S."/>
            <person name="Zhong J."/>
            <person name="Goodwin L."/>
            <person name="Copeland A."/>
            <person name="Lucas S."/>
            <person name="Han C."/>
            <person name="Pitluck S."/>
            <person name="Land M.L."/>
            <person name="Kyrpides N.C."/>
            <person name="Woyke T."/>
        </authorList>
    </citation>
    <scope>NUCLEOTIDE SEQUENCE [LARGE SCALE GENOMIC DNA]</scope>
    <source>
        <strain>ATCC 29413 / PCC 7937</strain>
    </source>
</reference>
<protein>
    <recommendedName>
        <fullName evidence="1">UPF0102 protein Ava_4800</fullName>
    </recommendedName>
</protein>
<comment type="similarity">
    <text evidence="1">Belongs to the UPF0102 family.</text>
</comment>
<dbReference type="EMBL" id="CP000117">
    <property type="protein sequence ID" value="ABA24397.1"/>
    <property type="molecule type" value="Genomic_DNA"/>
</dbReference>
<dbReference type="SMR" id="Q3M3N9"/>
<dbReference type="STRING" id="240292.Ava_4800"/>
<dbReference type="KEGG" id="ava:Ava_4800"/>
<dbReference type="eggNOG" id="COG0792">
    <property type="taxonomic scope" value="Bacteria"/>
</dbReference>
<dbReference type="HOGENOM" id="CLU_115353_3_0_3"/>
<dbReference type="Proteomes" id="UP000002533">
    <property type="component" value="Chromosome"/>
</dbReference>
<dbReference type="GO" id="GO:0003676">
    <property type="term" value="F:nucleic acid binding"/>
    <property type="evidence" value="ECO:0007669"/>
    <property type="project" value="InterPro"/>
</dbReference>
<dbReference type="Gene3D" id="3.40.1350.10">
    <property type="match status" value="1"/>
</dbReference>
<dbReference type="HAMAP" id="MF_00048">
    <property type="entry name" value="UPF0102"/>
    <property type="match status" value="1"/>
</dbReference>
<dbReference type="InterPro" id="IPR011335">
    <property type="entry name" value="Restrct_endonuc-II-like"/>
</dbReference>
<dbReference type="InterPro" id="IPR011856">
    <property type="entry name" value="tRNA_endonuc-like_dom_sf"/>
</dbReference>
<dbReference type="InterPro" id="IPR003509">
    <property type="entry name" value="UPF0102_YraN-like"/>
</dbReference>
<dbReference type="NCBIfam" id="TIGR00252">
    <property type="entry name" value="YraN family protein"/>
    <property type="match status" value="1"/>
</dbReference>
<dbReference type="PANTHER" id="PTHR34039">
    <property type="entry name" value="UPF0102 PROTEIN YRAN"/>
    <property type="match status" value="1"/>
</dbReference>
<dbReference type="PANTHER" id="PTHR34039:SF1">
    <property type="entry name" value="UPF0102 PROTEIN YRAN"/>
    <property type="match status" value="1"/>
</dbReference>
<dbReference type="Pfam" id="PF02021">
    <property type="entry name" value="UPF0102"/>
    <property type="match status" value="1"/>
</dbReference>
<dbReference type="SUPFAM" id="SSF52980">
    <property type="entry name" value="Restriction endonuclease-like"/>
    <property type="match status" value="1"/>
</dbReference>
<proteinExistence type="inferred from homology"/>
<accession>Q3M3N9</accession>